<accession>A5GV74</accession>
<protein>
    <recommendedName>
        <fullName evidence="1">ATP synthase subunit b</fullName>
    </recommendedName>
    <alternativeName>
        <fullName evidence="1">ATP synthase F(0) sector subunit b</fullName>
    </alternativeName>
    <alternativeName>
        <fullName evidence="1">ATPase subunit I</fullName>
    </alternativeName>
    <alternativeName>
        <fullName evidence="1">F-type ATPase subunit b</fullName>
        <shortName evidence="1">F-ATPase subunit b</shortName>
    </alternativeName>
</protein>
<evidence type="ECO:0000255" key="1">
    <source>
        <dbReference type="HAMAP-Rule" id="MF_01398"/>
    </source>
</evidence>
<feature type="chain" id="PRO_0000368831" description="ATP synthase subunit b">
    <location>
        <begin position="1"/>
        <end position="171"/>
    </location>
</feature>
<feature type="transmembrane region" description="Helical" evidence="1">
    <location>
        <begin position="26"/>
        <end position="46"/>
    </location>
</feature>
<organism>
    <name type="scientific">Synechococcus sp. (strain RCC307)</name>
    <dbReference type="NCBI Taxonomy" id="316278"/>
    <lineage>
        <taxon>Bacteria</taxon>
        <taxon>Bacillati</taxon>
        <taxon>Cyanobacteriota</taxon>
        <taxon>Cyanophyceae</taxon>
        <taxon>Synechococcales</taxon>
        <taxon>Synechococcaceae</taxon>
        <taxon>Synechococcus</taxon>
    </lineage>
</organism>
<dbReference type="EMBL" id="CT978603">
    <property type="protein sequence ID" value="CAK28783.1"/>
    <property type="molecule type" value="Genomic_DNA"/>
</dbReference>
<dbReference type="SMR" id="A5GV74"/>
<dbReference type="STRING" id="316278.SynRCC307_1880"/>
<dbReference type="KEGG" id="syr:SynRCC307_1880"/>
<dbReference type="eggNOG" id="COG0711">
    <property type="taxonomic scope" value="Bacteria"/>
</dbReference>
<dbReference type="HOGENOM" id="CLU_079215_8_1_3"/>
<dbReference type="OrthoDB" id="461217at2"/>
<dbReference type="Proteomes" id="UP000001115">
    <property type="component" value="Chromosome"/>
</dbReference>
<dbReference type="GO" id="GO:0031676">
    <property type="term" value="C:plasma membrane-derived thylakoid membrane"/>
    <property type="evidence" value="ECO:0007669"/>
    <property type="project" value="UniProtKB-SubCell"/>
</dbReference>
<dbReference type="GO" id="GO:0045259">
    <property type="term" value="C:proton-transporting ATP synthase complex"/>
    <property type="evidence" value="ECO:0007669"/>
    <property type="project" value="UniProtKB-KW"/>
</dbReference>
<dbReference type="GO" id="GO:0046933">
    <property type="term" value="F:proton-transporting ATP synthase activity, rotational mechanism"/>
    <property type="evidence" value="ECO:0007669"/>
    <property type="project" value="UniProtKB-UniRule"/>
</dbReference>
<dbReference type="CDD" id="cd06503">
    <property type="entry name" value="ATP-synt_Fo_b"/>
    <property type="match status" value="1"/>
</dbReference>
<dbReference type="Gene3D" id="1.20.5.620">
    <property type="entry name" value="F1F0 ATP synthase subunit B, membrane domain"/>
    <property type="match status" value="1"/>
</dbReference>
<dbReference type="HAMAP" id="MF_01398">
    <property type="entry name" value="ATP_synth_b_bprime"/>
    <property type="match status" value="1"/>
</dbReference>
<dbReference type="InterPro" id="IPR028987">
    <property type="entry name" value="ATP_synth_B-like_membr_sf"/>
</dbReference>
<dbReference type="InterPro" id="IPR002146">
    <property type="entry name" value="ATP_synth_b/b'su_bac/chlpt"/>
</dbReference>
<dbReference type="InterPro" id="IPR005864">
    <property type="entry name" value="ATP_synth_F0_bsu_bac"/>
</dbReference>
<dbReference type="NCBIfam" id="TIGR01144">
    <property type="entry name" value="ATP_synt_b"/>
    <property type="match status" value="1"/>
</dbReference>
<dbReference type="NCBIfam" id="NF005606">
    <property type="entry name" value="PRK07352.1"/>
    <property type="match status" value="1"/>
</dbReference>
<dbReference type="PANTHER" id="PTHR34264">
    <property type="entry name" value="ATP SYNTHASE SUBUNIT B, CHLOROPLASTIC"/>
    <property type="match status" value="1"/>
</dbReference>
<dbReference type="PANTHER" id="PTHR34264:SF3">
    <property type="entry name" value="ATP SYNTHASE SUBUNIT B, CHLOROPLASTIC"/>
    <property type="match status" value="1"/>
</dbReference>
<dbReference type="Pfam" id="PF00430">
    <property type="entry name" value="ATP-synt_B"/>
    <property type="match status" value="1"/>
</dbReference>
<dbReference type="SUPFAM" id="SSF81573">
    <property type="entry name" value="F1F0 ATP synthase subunit B, membrane domain"/>
    <property type="match status" value="1"/>
</dbReference>
<proteinExistence type="inferred from homology"/>
<comment type="function">
    <text evidence="1">F(1)F(0) ATP synthase produces ATP from ADP in the presence of a proton or sodium gradient. F-type ATPases consist of two structural domains, F(1) containing the extramembraneous catalytic core and F(0) containing the membrane proton channel, linked together by a central stalk and a peripheral stalk. During catalysis, ATP synthesis in the catalytic domain of F(1) is coupled via a rotary mechanism of the central stalk subunits to proton translocation.</text>
</comment>
<comment type="function">
    <text evidence="1">Component of the F(0) channel, it forms part of the peripheral stalk, linking F(1) to F(0).</text>
</comment>
<comment type="subunit">
    <text evidence="1">F-type ATPases have 2 components, F(1) - the catalytic core - and F(0) - the membrane proton channel. F(1) has five subunits: alpha(3), beta(3), gamma(1), delta(1), epsilon(1). F(0) has four main subunits: a(1), b(1), b'(1) and c(10-14). The alpha and beta chains form an alternating ring which encloses part of the gamma chain. F(1) is attached to F(0) by a central stalk formed by the gamma and epsilon chains, while a peripheral stalk is formed by the delta, b and b' chains.</text>
</comment>
<comment type="subcellular location">
    <subcellularLocation>
        <location evidence="1">Cellular thylakoid membrane</location>
        <topology evidence="1">Single-pass membrane protein</topology>
    </subcellularLocation>
</comment>
<comment type="similarity">
    <text evidence="1">Belongs to the ATPase B chain family.</text>
</comment>
<gene>
    <name evidence="1" type="primary">atpF</name>
    <name type="ordered locus">SynRCC307_1880</name>
</gene>
<sequence>MTTSLPFVLANHGFALNFNVFETNLINLVLVIALLVYFLKGFLGGILERRREAILADLKDAEERLVTASKALEEGQRELAQAKSTAEKILAEAKQRADLIREDGEKRTIEEMARIKQDANANLNAEAARVIEALRAETARTAIDKALAALPKRLNDAKRAELIDRSIEALG</sequence>
<keyword id="KW-0066">ATP synthesis</keyword>
<keyword id="KW-0138">CF(0)</keyword>
<keyword id="KW-0375">Hydrogen ion transport</keyword>
<keyword id="KW-0406">Ion transport</keyword>
<keyword id="KW-0472">Membrane</keyword>
<keyword id="KW-1185">Reference proteome</keyword>
<keyword id="KW-0793">Thylakoid</keyword>
<keyword id="KW-0812">Transmembrane</keyword>
<keyword id="KW-1133">Transmembrane helix</keyword>
<keyword id="KW-0813">Transport</keyword>
<reference key="1">
    <citation type="submission" date="2006-05" db="EMBL/GenBank/DDBJ databases">
        <authorList>
            <consortium name="Genoscope"/>
        </authorList>
    </citation>
    <scope>NUCLEOTIDE SEQUENCE [LARGE SCALE GENOMIC DNA]</scope>
    <source>
        <strain>RCC307</strain>
    </source>
</reference>
<name>ATPF_SYNR3</name>